<reference key="1">
    <citation type="submission" date="2005-07" db="EMBL/GenBank/DDBJ databases">
        <title>Identification of Mx cDNAs in sea mammals.</title>
        <authorList>
            <person name="Sakamoto A."/>
            <person name="Seyama T."/>
            <person name="Ueda J."/>
            <person name="Watanabe T."/>
        </authorList>
    </citation>
    <scope>NUCLEOTIDE SEQUENCE [MRNA]</scope>
    <source>
        <tissue>Placenta</tissue>
    </source>
</reference>
<reference key="2">
    <citation type="journal article" date="2007" name="Microbes Infect.">
        <title>The Mx GTPase family of interferon-induced antiviral proteins.</title>
        <authorList>
            <person name="Haller O."/>
            <person name="Stertz S."/>
            <person name="Kochs G."/>
        </authorList>
    </citation>
    <scope>REVIEW</scope>
    <scope>INDUCTION</scope>
</reference>
<keyword id="KW-0007">Acetylation</keyword>
<keyword id="KW-0051">Antiviral defense</keyword>
<keyword id="KW-0963">Cytoplasm</keyword>
<keyword id="KW-0256">Endoplasmic reticulum</keyword>
<keyword id="KW-0342">GTP-binding</keyword>
<keyword id="KW-0391">Immunity</keyword>
<keyword id="KW-0399">Innate immunity</keyword>
<keyword id="KW-0472">Membrane</keyword>
<keyword id="KW-0547">Nucleotide-binding</keyword>
<keyword id="KW-0832">Ubl conjugation</keyword>
<sequence length="658" mass="75103">MVNSKGKITDSDPGSSHLLLNGLADKAGKNQDTEPENSLCSQYEEKVRPCIDLIDSLRALGVEQDLALPAIAVIGDQSSGKSSVLEALSGVALPRGSGIVTRCPLVLKLKKLLNKDEWRGKVSYQDFEMEISDPSEVEVEINKAQNAIAGEGQGISHELISLEVSSPHVPDLTLIDLPGITRVAVGNQPADIGHQTKKLIKKYILKQETINLVVVPCNVDIATTEALSMAEEVDPDGDRTIGILTKPDLVDRGTESKVVDVAQNLVCHLKKGYMIVKCRGQQDIQDQVTLTEALQKERDFFEDHPHFRVLLEEGRATVPCLADRLTSELITHICKTLPLLENQIKENYEKITEELQKYGSDVPEEEHEKMFFLIEKINAFNHDITSLTEGEEFVGEDECRLFTKIRNEFHKWSLVIEKRFQRGYKAICKQIERFENRYRGRELPGFVNYKTFEIIIKQQIKELEEPAVYMLHTITDMVQAAFTDISEANFAEFFNLYRTTKSKIEDIKFELEKEAEKSIRLHFQMEQIVYCQDQVYQCALQRVREESDKGKDRKINSMCSKEVSSVNISLSDIFEHLLAYRQEATNRISSHIPLIIQYFILQVYGQKLQKDMLLLLHDKDTHNWLLKERSDTSDKRKLLKERLARLAQARRRLAKFPG</sequence>
<comment type="function">
    <text evidence="1">Interferon-induced dynamin-like GTPase with antiviral activity.</text>
</comment>
<comment type="subunit">
    <text evidence="1">Homooligomer. Oligomerizes into multimeric filamentous or ring-like structures by virtue of its stalk domain. Oligomerization is critical for GTPase activity, protein stability, and recognition of viral target structures (By similarity). Interacts with TRPC1, TRPC3, TRPC4, TRPC5, TRPC6 and TRPC7 (By similarity). Interacts with HSPA5 (By similarity). Interacts with TUBB/TUBB5 (By similarity). Interacts with DDX39A and DDX39B (By similarity).</text>
</comment>
<comment type="subcellular location">
    <subcellularLocation>
        <location evidence="1">Cytoplasm</location>
    </subcellularLocation>
    <subcellularLocation>
        <location evidence="1">Endoplasmic reticulum membrane</location>
        <topology evidence="1">Peripheral membrane protein</topology>
        <orientation evidence="1">Cytoplasmic side</orientation>
    </subcellularLocation>
    <subcellularLocation>
        <location evidence="1">Cytoplasm</location>
        <location evidence="1">Perinuclear region</location>
    </subcellularLocation>
    <text evidence="1">Binds preferentially to negatively charged phospholipids.</text>
</comment>
<comment type="induction">
    <text evidence="7">By type I and type III interferons.</text>
</comment>
<comment type="domain">
    <text evidence="1">The C-terminal GTPase effector domain (GED) is involved in oligomerization and viral target recognition.</text>
</comment>
<comment type="domain">
    <text evidence="1">The middle domain mediates self-assembly and oligomerization.</text>
</comment>
<comment type="PTM">
    <text evidence="1">ISGylated.</text>
</comment>
<comment type="similarity">
    <text evidence="5">Belongs to the TRAFAC class dynamin-like GTPase superfamily. Dynamin/Fzo/YdjA family.</text>
</comment>
<protein>
    <recommendedName>
        <fullName>Interferon-induced GTP-binding protein Mx1</fullName>
    </recommendedName>
    <alternativeName>
        <fullName>Myxoma resistance protein 1</fullName>
    </alternativeName>
    <alternativeName>
        <fullName>Myxovirus resistance protein 1</fullName>
    </alternativeName>
</protein>
<evidence type="ECO:0000250" key="1"/>
<evidence type="ECO:0000250" key="2">
    <source>
        <dbReference type="UniProtKB" id="P20591"/>
    </source>
</evidence>
<evidence type="ECO:0000255" key="3"/>
<evidence type="ECO:0000255" key="4">
    <source>
        <dbReference type="PROSITE-ProRule" id="PRU00720"/>
    </source>
</evidence>
<evidence type="ECO:0000255" key="5">
    <source>
        <dbReference type="PROSITE-ProRule" id="PRU01055"/>
    </source>
</evidence>
<evidence type="ECO:0000256" key="6">
    <source>
        <dbReference type="SAM" id="MobiDB-lite"/>
    </source>
</evidence>
<evidence type="ECO:0000269" key="7">
    <source>
    </source>
</evidence>
<gene>
    <name type="primary">MX1</name>
    <name type="synonym">MX</name>
</gene>
<feature type="chain" id="PRO_0000319952" description="Interferon-induced GTP-binding protein Mx1">
    <location>
        <begin position="1"/>
        <end position="658"/>
    </location>
</feature>
<feature type="domain" description="Dynamin-type G" evidence="5">
    <location>
        <begin position="65"/>
        <end position="338"/>
    </location>
</feature>
<feature type="domain" description="GED" evidence="4">
    <location>
        <begin position="570"/>
        <end position="658"/>
    </location>
</feature>
<feature type="region of interest" description="Disordered" evidence="6">
    <location>
        <begin position="1"/>
        <end position="20"/>
    </location>
</feature>
<feature type="region of interest" description="G1 motif" evidence="5">
    <location>
        <begin position="75"/>
        <end position="82"/>
    </location>
</feature>
<feature type="region of interest" description="G2 motif" evidence="5">
    <location>
        <begin position="100"/>
        <end position="102"/>
    </location>
</feature>
<feature type="region of interest" description="G3 motif" evidence="5">
    <location>
        <begin position="176"/>
        <end position="179"/>
    </location>
</feature>
<feature type="region of interest" description="G4 motif" evidence="5">
    <location>
        <begin position="245"/>
        <end position="248"/>
    </location>
</feature>
<feature type="region of interest" description="G5 motif" evidence="5">
    <location>
        <begin position="277"/>
        <end position="280"/>
    </location>
</feature>
<feature type="region of interest" description="Bundle signaling element (BSE)" evidence="1">
    <location>
        <begin position="339"/>
        <end position="364"/>
    </location>
</feature>
<feature type="region of interest" description="Middle domain" evidence="1">
    <location>
        <begin position="364"/>
        <end position="531"/>
    </location>
</feature>
<feature type="region of interest" description="Stalk" evidence="1">
    <location>
        <begin position="365"/>
        <end position="628"/>
    </location>
</feature>
<feature type="region of interest" description="Critical for lipid-binding" evidence="1">
    <location>
        <begin position="551"/>
        <end position="554"/>
    </location>
</feature>
<feature type="binding site" evidence="3">
    <location>
        <begin position="75"/>
        <end position="82"/>
    </location>
    <ligand>
        <name>GTP</name>
        <dbReference type="ChEBI" id="CHEBI:37565"/>
    </ligand>
</feature>
<feature type="binding site" evidence="3">
    <location>
        <begin position="176"/>
        <end position="180"/>
    </location>
    <ligand>
        <name>GTP</name>
        <dbReference type="ChEBI" id="CHEBI:37565"/>
    </ligand>
</feature>
<feature type="binding site" evidence="3">
    <location>
        <begin position="245"/>
        <end position="248"/>
    </location>
    <ligand>
        <name>GTP</name>
        <dbReference type="ChEBI" id="CHEBI:37565"/>
    </ligand>
</feature>
<feature type="modified residue" description="N-acetylmethionine" evidence="2">
    <location>
        <position position="1"/>
    </location>
</feature>
<proteinExistence type="evidence at transcript level"/>
<name>MX1_EUMJU</name>
<accession>Q4ADG8</accession>
<dbReference type="EMBL" id="AB222179">
    <property type="protein sequence ID" value="BAE16330.1"/>
    <property type="molecule type" value="mRNA"/>
</dbReference>
<dbReference type="RefSeq" id="XP_027982268.1">
    <property type="nucleotide sequence ID" value="XM_028126467.1"/>
</dbReference>
<dbReference type="RefSeq" id="XP_027982269.1">
    <property type="nucleotide sequence ID" value="XM_028126468.1"/>
</dbReference>
<dbReference type="RefSeq" id="XP_027982270.1">
    <property type="nucleotide sequence ID" value="XM_028126469.1"/>
</dbReference>
<dbReference type="SMR" id="Q4ADG8"/>
<dbReference type="GeneID" id="114226390"/>
<dbReference type="GO" id="GO:0005737">
    <property type="term" value="C:cytoplasm"/>
    <property type="evidence" value="ECO:0000250"/>
    <property type="project" value="UniProtKB"/>
</dbReference>
<dbReference type="GO" id="GO:0005789">
    <property type="term" value="C:endoplasmic reticulum membrane"/>
    <property type="evidence" value="ECO:0007669"/>
    <property type="project" value="UniProtKB-SubCell"/>
</dbReference>
<dbReference type="GO" id="GO:0005874">
    <property type="term" value="C:microtubule"/>
    <property type="evidence" value="ECO:0007669"/>
    <property type="project" value="TreeGrafter"/>
</dbReference>
<dbReference type="GO" id="GO:0005634">
    <property type="term" value="C:nucleus"/>
    <property type="evidence" value="ECO:0007669"/>
    <property type="project" value="TreeGrafter"/>
</dbReference>
<dbReference type="GO" id="GO:0048471">
    <property type="term" value="C:perinuclear region of cytoplasm"/>
    <property type="evidence" value="ECO:0007669"/>
    <property type="project" value="UniProtKB-SubCell"/>
</dbReference>
<dbReference type="GO" id="GO:0005886">
    <property type="term" value="C:plasma membrane"/>
    <property type="evidence" value="ECO:0007669"/>
    <property type="project" value="TreeGrafter"/>
</dbReference>
<dbReference type="GO" id="GO:0098793">
    <property type="term" value="C:presynapse"/>
    <property type="evidence" value="ECO:0007669"/>
    <property type="project" value="GOC"/>
</dbReference>
<dbReference type="GO" id="GO:0005525">
    <property type="term" value="F:GTP binding"/>
    <property type="evidence" value="ECO:0007669"/>
    <property type="project" value="UniProtKB-KW"/>
</dbReference>
<dbReference type="GO" id="GO:0003924">
    <property type="term" value="F:GTPase activity"/>
    <property type="evidence" value="ECO:0007669"/>
    <property type="project" value="InterPro"/>
</dbReference>
<dbReference type="GO" id="GO:0008017">
    <property type="term" value="F:microtubule binding"/>
    <property type="evidence" value="ECO:0007669"/>
    <property type="project" value="TreeGrafter"/>
</dbReference>
<dbReference type="GO" id="GO:0051607">
    <property type="term" value="P:defense response to virus"/>
    <property type="evidence" value="ECO:0007669"/>
    <property type="project" value="UniProtKB-KW"/>
</dbReference>
<dbReference type="GO" id="GO:0045087">
    <property type="term" value="P:innate immune response"/>
    <property type="evidence" value="ECO:0007669"/>
    <property type="project" value="UniProtKB-KW"/>
</dbReference>
<dbReference type="GO" id="GO:0031623">
    <property type="term" value="P:receptor internalization"/>
    <property type="evidence" value="ECO:0007669"/>
    <property type="project" value="TreeGrafter"/>
</dbReference>
<dbReference type="GO" id="GO:0016185">
    <property type="term" value="P:synaptic vesicle budding from presynaptic endocytic zone membrane"/>
    <property type="evidence" value="ECO:0007669"/>
    <property type="project" value="TreeGrafter"/>
</dbReference>
<dbReference type="CDD" id="cd08771">
    <property type="entry name" value="DLP_1"/>
    <property type="match status" value="1"/>
</dbReference>
<dbReference type="FunFam" id="1.20.120.1240:FF:000007">
    <property type="entry name" value="Interferon-induced GTP-binding protein Mx1"/>
    <property type="match status" value="1"/>
</dbReference>
<dbReference type="FunFam" id="3.40.50.300:FF:000621">
    <property type="entry name" value="Interferon-induced GTP-binding protein Mx1"/>
    <property type="match status" value="1"/>
</dbReference>
<dbReference type="Gene3D" id="1.20.120.1240">
    <property type="entry name" value="Dynamin, middle domain"/>
    <property type="match status" value="1"/>
</dbReference>
<dbReference type="Gene3D" id="3.40.50.300">
    <property type="entry name" value="P-loop containing nucleotide triphosphate hydrolases"/>
    <property type="match status" value="1"/>
</dbReference>
<dbReference type="InterPro" id="IPR022812">
    <property type="entry name" value="Dynamin"/>
</dbReference>
<dbReference type="InterPro" id="IPR001401">
    <property type="entry name" value="Dynamin_GTPase"/>
</dbReference>
<dbReference type="InterPro" id="IPR019762">
    <property type="entry name" value="Dynamin_GTPase_CS"/>
</dbReference>
<dbReference type="InterPro" id="IPR045063">
    <property type="entry name" value="Dynamin_N"/>
</dbReference>
<dbReference type="InterPro" id="IPR000375">
    <property type="entry name" value="Dynamin_stalk"/>
</dbReference>
<dbReference type="InterPro" id="IPR030381">
    <property type="entry name" value="G_DYNAMIN_dom"/>
</dbReference>
<dbReference type="InterPro" id="IPR003130">
    <property type="entry name" value="GED"/>
</dbReference>
<dbReference type="InterPro" id="IPR020850">
    <property type="entry name" value="GED_dom"/>
</dbReference>
<dbReference type="InterPro" id="IPR027417">
    <property type="entry name" value="P-loop_NTPase"/>
</dbReference>
<dbReference type="PANTHER" id="PTHR11566">
    <property type="entry name" value="DYNAMIN"/>
    <property type="match status" value="1"/>
</dbReference>
<dbReference type="PANTHER" id="PTHR11566:SF217">
    <property type="entry name" value="INTERFERON-INDUCED GTP-BINDING PROTEIN MX1"/>
    <property type="match status" value="1"/>
</dbReference>
<dbReference type="Pfam" id="PF01031">
    <property type="entry name" value="Dynamin_M"/>
    <property type="match status" value="1"/>
</dbReference>
<dbReference type="Pfam" id="PF00350">
    <property type="entry name" value="Dynamin_N"/>
    <property type="match status" value="1"/>
</dbReference>
<dbReference type="Pfam" id="PF02212">
    <property type="entry name" value="GED"/>
    <property type="match status" value="1"/>
</dbReference>
<dbReference type="PRINTS" id="PR00195">
    <property type="entry name" value="DYNAMIN"/>
</dbReference>
<dbReference type="SMART" id="SM00053">
    <property type="entry name" value="DYNc"/>
    <property type="match status" value="1"/>
</dbReference>
<dbReference type="SMART" id="SM00302">
    <property type="entry name" value="GED"/>
    <property type="match status" value="1"/>
</dbReference>
<dbReference type="SUPFAM" id="SSF52540">
    <property type="entry name" value="P-loop containing nucleoside triphosphate hydrolases"/>
    <property type="match status" value="1"/>
</dbReference>
<dbReference type="PROSITE" id="PS00410">
    <property type="entry name" value="G_DYNAMIN_1"/>
    <property type="match status" value="1"/>
</dbReference>
<dbReference type="PROSITE" id="PS51718">
    <property type="entry name" value="G_DYNAMIN_2"/>
    <property type="match status" value="1"/>
</dbReference>
<dbReference type="PROSITE" id="PS51388">
    <property type="entry name" value="GED"/>
    <property type="match status" value="1"/>
</dbReference>
<organism>
    <name type="scientific">Eumetopias jubatus</name>
    <name type="common">Steller sea lion</name>
    <name type="synonym">Phoca jubata</name>
    <dbReference type="NCBI Taxonomy" id="34886"/>
    <lineage>
        <taxon>Eukaryota</taxon>
        <taxon>Metazoa</taxon>
        <taxon>Chordata</taxon>
        <taxon>Craniata</taxon>
        <taxon>Vertebrata</taxon>
        <taxon>Euteleostomi</taxon>
        <taxon>Mammalia</taxon>
        <taxon>Eutheria</taxon>
        <taxon>Laurasiatheria</taxon>
        <taxon>Carnivora</taxon>
        <taxon>Caniformia</taxon>
        <taxon>Pinnipedia</taxon>
        <taxon>Otariidae</taxon>
        <taxon>Eumetopias</taxon>
    </lineage>
</organism>